<evidence type="ECO:0000250" key="1"/>
<evidence type="ECO:0000255" key="2"/>
<evidence type="ECO:0000305" key="3"/>
<feature type="chain" id="PRO_0000169331" description="UPF0382 inner membrane protein YgdD">
    <location>
        <begin position="1"/>
        <end position="131"/>
    </location>
</feature>
<feature type="topological domain" description="Periplasmic" evidence="2">
    <location>
        <begin position="1"/>
        <end position="4"/>
    </location>
</feature>
<feature type="transmembrane region" description="Helical" evidence="2">
    <location>
        <begin position="5"/>
        <end position="25"/>
    </location>
</feature>
<feature type="topological domain" description="Cytoplasmic" evidence="2">
    <location>
        <begin position="26"/>
        <end position="64"/>
    </location>
</feature>
<feature type="transmembrane region" description="Helical" evidence="2">
    <location>
        <begin position="65"/>
        <end position="85"/>
    </location>
</feature>
<feature type="topological domain" description="Periplasmic" evidence="2">
    <location>
        <begin position="86"/>
        <end position="97"/>
    </location>
</feature>
<feature type="transmembrane region" description="Helical" evidence="2">
    <location>
        <begin position="98"/>
        <end position="118"/>
    </location>
</feature>
<feature type="topological domain" description="Cytoplasmic" evidence="2">
    <location>
        <begin position="119"/>
        <end position="131"/>
    </location>
</feature>
<accession>P0ADR3</accession>
<accession>P32065</accession>
<accession>Q46667</accession>
<keyword id="KW-0997">Cell inner membrane</keyword>
<keyword id="KW-1003">Cell membrane</keyword>
<keyword id="KW-0472">Membrane</keyword>
<keyword id="KW-1185">Reference proteome</keyword>
<keyword id="KW-0812">Transmembrane</keyword>
<keyword id="KW-1133">Transmembrane helix</keyword>
<proteinExistence type="inferred from homology"/>
<sequence>MTSRFMLIFAAISGFIFVALGAFGAHVLSKTMGAVEMGWIQTGLEYQAFHTLAILGLAVAMQRRISIWFYWSSVFLALGTVLFSGSLYCLALSHLRLWAFVTPVGGVSFLAGWALMLVGAIRLKRKGVSHE</sequence>
<dbReference type="EMBL" id="AE014075">
    <property type="protein sequence ID" value="AAN81822.1"/>
    <property type="status" value="ALT_INIT"/>
    <property type="molecule type" value="Genomic_DNA"/>
</dbReference>
<dbReference type="RefSeq" id="WP_000203905.1">
    <property type="nucleotide sequence ID" value="NZ_CP051263.1"/>
</dbReference>
<dbReference type="STRING" id="199310.c3377"/>
<dbReference type="KEGG" id="ecc:c3377"/>
<dbReference type="eggNOG" id="COG2363">
    <property type="taxonomic scope" value="Bacteria"/>
</dbReference>
<dbReference type="HOGENOM" id="CLU_096548_3_2_6"/>
<dbReference type="Proteomes" id="UP000001410">
    <property type="component" value="Chromosome"/>
</dbReference>
<dbReference type="GO" id="GO:0005886">
    <property type="term" value="C:plasma membrane"/>
    <property type="evidence" value="ECO:0007669"/>
    <property type="project" value="UniProtKB-SubCell"/>
</dbReference>
<dbReference type="InterPro" id="IPR006696">
    <property type="entry name" value="DUF423"/>
</dbReference>
<dbReference type="NCBIfam" id="NF008125">
    <property type="entry name" value="PRK10873.1"/>
    <property type="match status" value="1"/>
</dbReference>
<dbReference type="PANTHER" id="PTHR43461">
    <property type="entry name" value="TRANSMEMBRANE PROTEIN 256"/>
    <property type="match status" value="1"/>
</dbReference>
<dbReference type="PANTHER" id="PTHR43461:SF1">
    <property type="entry name" value="TRANSMEMBRANE PROTEIN 256"/>
    <property type="match status" value="1"/>
</dbReference>
<dbReference type="Pfam" id="PF04241">
    <property type="entry name" value="DUF423"/>
    <property type="match status" value="1"/>
</dbReference>
<organism>
    <name type="scientific">Escherichia coli O6:H1 (strain CFT073 / ATCC 700928 / UPEC)</name>
    <dbReference type="NCBI Taxonomy" id="199310"/>
    <lineage>
        <taxon>Bacteria</taxon>
        <taxon>Pseudomonadati</taxon>
        <taxon>Pseudomonadota</taxon>
        <taxon>Gammaproteobacteria</taxon>
        <taxon>Enterobacterales</taxon>
        <taxon>Enterobacteriaceae</taxon>
        <taxon>Escherichia</taxon>
    </lineage>
</organism>
<comment type="subcellular location">
    <subcellularLocation>
        <location evidence="1">Cell inner membrane</location>
        <topology evidence="1">Multi-pass membrane protein</topology>
    </subcellularLocation>
</comment>
<comment type="similarity">
    <text evidence="3">Belongs to the UPF0382 family.</text>
</comment>
<comment type="sequence caution" evidence="3">
    <conflict type="erroneous initiation">
        <sequence resource="EMBL-CDS" id="AAN81822"/>
    </conflict>
</comment>
<protein>
    <recommendedName>
        <fullName>UPF0382 inner membrane protein YgdD</fullName>
    </recommendedName>
</protein>
<reference key="1">
    <citation type="journal article" date="2002" name="Proc. Natl. Acad. Sci. U.S.A.">
        <title>Extensive mosaic structure revealed by the complete genome sequence of uropathogenic Escherichia coli.</title>
        <authorList>
            <person name="Welch R.A."/>
            <person name="Burland V."/>
            <person name="Plunkett G. III"/>
            <person name="Redford P."/>
            <person name="Roesch P."/>
            <person name="Rasko D."/>
            <person name="Buckles E.L."/>
            <person name="Liou S.-R."/>
            <person name="Boutin A."/>
            <person name="Hackett J."/>
            <person name="Stroud D."/>
            <person name="Mayhew G.F."/>
            <person name="Rose D.J."/>
            <person name="Zhou S."/>
            <person name="Schwartz D.C."/>
            <person name="Perna N.T."/>
            <person name="Mobley H.L.T."/>
            <person name="Donnenberg M.S."/>
            <person name="Blattner F.R."/>
        </authorList>
    </citation>
    <scope>NUCLEOTIDE SEQUENCE [LARGE SCALE GENOMIC DNA]</scope>
    <source>
        <strain>CFT073 / ATCC 700928 / UPEC</strain>
    </source>
</reference>
<name>YGDD_ECOL6</name>
<gene>
    <name type="primary">ygdD</name>
    <name type="ordered locus">c3377</name>
</gene>